<protein>
    <recommendedName>
        <fullName evidence="1">Large ribosomal subunit protein bL17</fullName>
    </recommendedName>
    <alternativeName>
        <fullName evidence="2">50S ribosomal protein L17</fullName>
    </alternativeName>
</protein>
<feature type="chain" id="PRO_1000068024" description="Large ribosomal subunit protein bL17">
    <location>
        <begin position="1"/>
        <end position="127"/>
    </location>
</feature>
<evidence type="ECO:0000255" key="1">
    <source>
        <dbReference type="HAMAP-Rule" id="MF_01368"/>
    </source>
</evidence>
<evidence type="ECO:0000305" key="2"/>
<sequence length="127" mass="14275">MRHLKSGRRLGRKTSHREAMFRNMVTSLFAHEKITTTDAKAKEIRSVAEKMITLGKRGDLHSTRIAAAFIREKSVVTKLFSTIAPRYKERAGGYTRIIKVGSRNGDAAPMSIIELVEEEFTPKASRA</sequence>
<dbReference type="EMBL" id="CP000482">
    <property type="protein sequence ID" value="ABK98338.1"/>
    <property type="molecule type" value="Genomic_DNA"/>
</dbReference>
<dbReference type="SMR" id="A1ALW8"/>
<dbReference type="STRING" id="338966.Ppro_0707"/>
<dbReference type="KEGG" id="ppd:Ppro_0707"/>
<dbReference type="eggNOG" id="COG0203">
    <property type="taxonomic scope" value="Bacteria"/>
</dbReference>
<dbReference type="HOGENOM" id="CLU_074407_2_2_7"/>
<dbReference type="OrthoDB" id="9809073at2"/>
<dbReference type="Proteomes" id="UP000006732">
    <property type="component" value="Chromosome"/>
</dbReference>
<dbReference type="GO" id="GO:0022625">
    <property type="term" value="C:cytosolic large ribosomal subunit"/>
    <property type="evidence" value="ECO:0007669"/>
    <property type="project" value="TreeGrafter"/>
</dbReference>
<dbReference type="GO" id="GO:0003735">
    <property type="term" value="F:structural constituent of ribosome"/>
    <property type="evidence" value="ECO:0007669"/>
    <property type="project" value="InterPro"/>
</dbReference>
<dbReference type="GO" id="GO:0006412">
    <property type="term" value="P:translation"/>
    <property type="evidence" value="ECO:0007669"/>
    <property type="project" value="UniProtKB-UniRule"/>
</dbReference>
<dbReference type="FunFam" id="3.90.1030.10:FF:000001">
    <property type="entry name" value="50S ribosomal protein L17"/>
    <property type="match status" value="1"/>
</dbReference>
<dbReference type="Gene3D" id="3.90.1030.10">
    <property type="entry name" value="Ribosomal protein L17"/>
    <property type="match status" value="1"/>
</dbReference>
<dbReference type="HAMAP" id="MF_01368">
    <property type="entry name" value="Ribosomal_bL17"/>
    <property type="match status" value="1"/>
</dbReference>
<dbReference type="InterPro" id="IPR000456">
    <property type="entry name" value="Ribosomal_bL17"/>
</dbReference>
<dbReference type="InterPro" id="IPR047859">
    <property type="entry name" value="Ribosomal_bL17_CS"/>
</dbReference>
<dbReference type="InterPro" id="IPR036373">
    <property type="entry name" value="Ribosomal_bL17_sf"/>
</dbReference>
<dbReference type="NCBIfam" id="TIGR00059">
    <property type="entry name" value="L17"/>
    <property type="match status" value="1"/>
</dbReference>
<dbReference type="PANTHER" id="PTHR14413:SF16">
    <property type="entry name" value="LARGE RIBOSOMAL SUBUNIT PROTEIN BL17M"/>
    <property type="match status" value="1"/>
</dbReference>
<dbReference type="PANTHER" id="PTHR14413">
    <property type="entry name" value="RIBOSOMAL PROTEIN L17"/>
    <property type="match status" value="1"/>
</dbReference>
<dbReference type="Pfam" id="PF01196">
    <property type="entry name" value="Ribosomal_L17"/>
    <property type="match status" value="1"/>
</dbReference>
<dbReference type="SUPFAM" id="SSF64263">
    <property type="entry name" value="Prokaryotic ribosomal protein L17"/>
    <property type="match status" value="1"/>
</dbReference>
<dbReference type="PROSITE" id="PS01167">
    <property type="entry name" value="RIBOSOMAL_L17"/>
    <property type="match status" value="1"/>
</dbReference>
<proteinExistence type="inferred from homology"/>
<reference key="1">
    <citation type="submission" date="2006-10" db="EMBL/GenBank/DDBJ databases">
        <title>Complete sequence of chromosome of Pelobacter propionicus DSM 2379.</title>
        <authorList>
            <consortium name="US DOE Joint Genome Institute"/>
            <person name="Copeland A."/>
            <person name="Lucas S."/>
            <person name="Lapidus A."/>
            <person name="Barry K."/>
            <person name="Detter J.C."/>
            <person name="Glavina del Rio T."/>
            <person name="Hammon N."/>
            <person name="Israni S."/>
            <person name="Dalin E."/>
            <person name="Tice H."/>
            <person name="Pitluck S."/>
            <person name="Saunders E."/>
            <person name="Brettin T."/>
            <person name="Bruce D."/>
            <person name="Han C."/>
            <person name="Tapia R."/>
            <person name="Schmutz J."/>
            <person name="Larimer F."/>
            <person name="Land M."/>
            <person name="Hauser L."/>
            <person name="Kyrpides N."/>
            <person name="Kim E."/>
            <person name="Lovley D."/>
            <person name="Richardson P."/>
        </authorList>
    </citation>
    <scope>NUCLEOTIDE SEQUENCE [LARGE SCALE GENOMIC DNA]</scope>
    <source>
        <strain>DSM 2379 / NBRC 103807 / OttBd1</strain>
    </source>
</reference>
<name>RL17_PELPD</name>
<keyword id="KW-1185">Reference proteome</keyword>
<keyword id="KW-0687">Ribonucleoprotein</keyword>
<keyword id="KW-0689">Ribosomal protein</keyword>
<comment type="subunit">
    <text evidence="1">Part of the 50S ribosomal subunit. Contacts protein L32.</text>
</comment>
<comment type="similarity">
    <text evidence="1">Belongs to the bacterial ribosomal protein bL17 family.</text>
</comment>
<accession>A1ALW8</accession>
<organism>
    <name type="scientific">Pelobacter propionicus (strain DSM 2379 / NBRC 103807 / OttBd1)</name>
    <dbReference type="NCBI Taxonomy" id="338966"/>
    <lineage>
        <taxon>Bacteria</taxon>
        <taxon>Pseudomonadati</taxon>
        <taxon>Thermodesulfobacteriota</taxon>
        <taxon>Desulfuromonadia</taxon>
        <taxon>Desulfuromonadales</taxon>
        <taxon>Desulfuromonadaceae</taxon>
        <taxon>Pelobacter</taxon>
    </lineage>
</organism>
<gene>
    <name evidence="1" type="primary">rplQ</name>
    <name type="ordered locus">Ppro_0707</name>
</gene>